<feature type="chain" id="PRO_1000074272" description="tRNA sulfurtransferase">
    <location>
        <begin position="1"/>
        <end position="484"/>
    </location>
</feature>
<feature type="domain" description="THUMP" evidence="1">
    <location>
        <begin position="63"/>
        <end position="167"/>
    </location>
</feature>
<feature type="domain" description="Rhodanese" evidence="1">
    <location>
        <begin position="406"/>
        <end position="484"/>
    </location>
</feature>
<feature type="active site" description="Cysteine persulfide intermediate" evidence="1">
    <location>
        <position position="458"/>
    </location>
</feature>
<feature type="binding site" evidence="1">
    <location>
        <begin position="185"/>
        <end position="186"/>
    </location>
    <ligand>
        <name>ATP</name>
        <dbReference type="ChEBI" id="CHEBI:30616"/>
    </ligand>
</feature>
<feature type="binding site" evidence="1">
    <location>
        <position position="267"/>
    </location>
    <ligand>
        <name>ATP</name>
        <dbReference type="ChEBI" id="CHEBI:30616"/>
    </ligand>
</feature>
<feature type="binding site" evidence="1">
    <location>
        <position position="289"/>
    </location>
    <ligand>
        <name>ATP</name>
        <dbReference type="ChEBI" id="CHEBI:30616"/>
    </ligand>
</feature>
<feature type="binding site" evidence="1">
    <location>
        <position position="298"/>
    </location>
    <ligand>
        <name>ATP</name>
        <dbReference type="ChEBI" id="CHEBI:30616"/>
    </ligand>
</feature>
<feature type="disulfide bond" description="Redox-active" evidence="1">
    <location>
        <begin position="346"/>
        <end position="458"/>
    </location>
</feature>
<organism>
    <name type="scientific">Shewanella sp. (strain ANA-3)</name>
    <dbReference type="NCBI Taxonomy" id="94122"/>
    <lineage>
        <taxon>Bacteria</taxon>
        <taxon>Pseudomonadati</taxon>
        <taxon>Pseudomonadota</taxon>
        <taxon>Gammaproteobacteria</taxon>
        <taxon>Alteromonadales</taxon>
        <taxon>Shewanellaceae</taxon>
        <taxon>Shewanella</taxon>
    </lineage>
</organism>
<keyword id="KW-0067">ATP-binding</keyword>
<keyword id="KW-0963">Cytoplasm</keyword>
<keyword id="KW-1015">Disulfide bond</keyword>
<keyword id="KW-0547">Nucleotide-binding</keyword>
<keyword id="KW-0676">Redox-active center</keyword>
<keyword id="KW-0694">RNA-binding</keyword>
<keyword id="KW-0784">Thiamine biosynthesis</keyword>
<keyword id="KW-0808">Transferase</keyword>
<keyword id="KW-0820">tRNA-binding</keyword>
<protein>
    <recommendedName>
        <fullName evidence="1">tRNA sulfurtransferase</fullName>
        <ecNumber evidence="1">2.8.1.4</ecNumber>
    </recommendedName>
    <alternativeName>
        <fullName evidence="1">Sulfur carrier protein ThiS sulfurtransferase</fullName>
    </alternativeName>
    <alternativeName>
        <fullName evidence="1">Thiamine biosynthesis protein ThiI</fullName>
    </alternativeName>
    <alternativeName>
        <fullName evidence="1">tRNA 4-thiouridine synthase</fullName>
    </alternativeName>
</protein>
<reference key="1">
    <citation type="submission" date="2006-09" db="EMBL/GenBank/DDBJ databases">
        <title>Complete sequence of chromosome 1 of Shewanella sp. ANA-3.</title>
        <authorList>
            <person name="Copeland A."/>
            <person name="Lucas S."/>
            <person name="Lapidus A."/>
            <person name="Barry K."/>
            <person name="Detter J.C."/>
            <person name="Glavina del Rio T."/>
            <person name="Hammon N."/>
            <person name="Israni S."/>
            <person name="Dalin E."/>
            <person name="Tice H."/>
            <person name="Pitluck S."/>
            <person name="Chertkov O."/>
            <person name="Brettin T."/>
            <person name="Bruce D."/>
            <person name="Han C."/>
            <person name="Tapia R."/>
            <person name="Gilna P."/>
            <person name="Schmutz J."/>
            <person name="Larimer F."/>
            <person name="Land M."/>
            <person name="Hauser L."/>
            <person name="Kyrpides N."/>
            <person name="Kim E."/>
            <person name="Newman D."/>
            <person name="Salticov C."/>
            <person name="Konstantinidis K."/>
            <person name="Klappenback J."/>
            <person name="Tiedje J."/>
            <person name="Richardson P."/>
        </authorList>
    </citation>
    <scope>NUCLEOTIDE SEQUENCE [LARGE SCALE GENOMIC DNA]</scope>
    <source>
        <strain>ANA-3</strain>
    </source>
</reference>
<comment type="function">
    <text evidence="1">Catalyzes the ATP-dependent transfer of a sulfur to tRNA to produce 4-thiouridine in position 8 of tRNAs, which functions as a near-UV photosensor. Also catalyzes the transfer of sulfur to the sulfur carrier protein ThiS, forming ThiS-thiocarboxylate. This is a step in the synthesis of thiazole, in the thiamine biosynthesis pathway. The sulfur is donated as persulfide by IscS.</text>
</comment>
<comment type="catalytic activity">
    <reaction evidence="1">
        <text>[ThiI sulfur-carrier protein]-S-sulfanyl-L-cysteine + a uridine in tRNA + 2 reduced [2Fe-2S]-[ferredoxin] + ATP + H(+) = [ThiI sulfur-carrier protein]-L-cysteine + a 4-thiouridine in tRNA + 2 oxidized [2Fe-2S]-[ferredoxin] + AMP + diphosphate</text>
        <dbReference type="Rhea" id="RHEA:24176"/>
        <dbReference type="Rhea" id="RHEA-COMP:10000"/>
        <dbReference type="Rhea" id="RHEA-COMP:10001"/>
        <dbReference type="Rhea" id="RHEA-COMP:13337"/>
        <dbReference type="Rhea" id="RHEA-COMP:13338"/>
        <dbReference type="Rhea" id="RHEA-COMP:13339"/>
        <dbReference type="Rhea" id="RHEA-COMP:13340"/>
        <dbReference type="ChEBI" id="CHEBI:15378"/>
        <dbReference type="ChEBI" id="CHEBI:29950"/>
        <dbReference type="ChEBI" id="CHEBI:30616"/>
        <dbReference type="ChEBI" id="CHEBI:33019"/>
        <dbReference type="ChEBI" id="CHEBI:33737"/>
        <dbReference type="ChEBI" id="CHEBI:33738"/>
        <dbReference type="ChEBI" id="CHEBI:61963"/>
        <dbReference type="ChEBI" id="CHEBI:65315"/>
        <dbReference type="ChEBI" id="CHEBI:136798"/>
        <dbReference type="ChEBI" id="CHEBI:456215"/>
        <dbReference type="EC" id="2.8.1.4"/>
    </reaction>
</comment>
<comment type="catalytic activity">
    <reaction evidence="1">
        <text>[ThiS sulfur-carrier protein]-C-terminal Gly-Gly-AMP + S-sulfanyl-L-cysteinyl-[cysteine desulfurase] + AH2 = [ThiS sulfur-carrier protein]-C-terminal-Gly-aminoethanethioate + L-cysteinyl-[cysteine desulfurase] + A + AMP + 2 H(+)</text>
        <dbReference type="Rhea" id="RHEA:43340"/>
        <dbReference type="Rhea" id="RHEA-COMP:12157"/>
        <dbReference type="Rhea" id="RHEA-COMP:12158"/>
        <dbReference type="Rhea" id="RHEA-COMP:12910"/>
        <dbReference type="Rhea" id="RHEA-COMP:19908"/>
        <dbReference type="ChEBI" id="CHEBI:13193"/>
        <dbReference type="ChEBI" id="CHEBI:15378"/>
        <dbReference type="ChEBI" id="CHEBI:17499"/>
        <dbReference type="ChEBI" id="CHEBI:29950"/>
        <dbReference type="ChEBI" id="CHEBI:61963"/>
        <dbReference type="ChEBI" id="CHEBI:90618"/>
        <dbReference type="ChEBI" id="CHEBI:232372"/>
        <dbReference type="ChEBI" id="CHEBI:456215"/>
    </reaction>
</comment>
<comment type="pathway">
    <text evidence="1">Cofactor biosynthesis; thiamine diphosphate biosynthesis.</text>
</comment>
<comment type="subcellular location">
    <subcellularLocation>
        <location evidence="1">Cytoplasm</location>
    </subcellularLocation>
</comment>
<comment type="similarity">
    <text evidence="1">Belongs to the ThiI family.</text>
</comment>
<accession>A0KZA4</accession>
<sequence length="484" mass="55025">MKFIVKLYPEIMMKSKPVRMRFTKMLETNIRNVLKKVDEDAKVQRQWDRIWVKVPNDKPELAQAFGERLACIPGIAHVVQVDEYSFTSVDDIYQQVLPVYRDQIAGKTFCVRVKRTGSHDFNSIEVERYVGGGLNQFTDAIGVRLKNPEVTVNLEIEGDKLYMVTKRIEGLGGFPMATQEDVLSLISGGFDSGVSSYQFIKKGARTHYCFFNLGGAQHEIGVKQVAYHLWKTYGESHKVKFVSVPFEPVVAEILEKIDNGQMGVVLKRMMMRTAARIAERMGIQAIVTGESLGQVSSQTLTNLNVIDRCTDMLILRPLIAMDKQDIINECRRIGTEDFAKSMPEYCGVISQKPTVKAVLAKVEAEETKFSEDLIDRIVEQAVAIDIREIAEQMNTRITETETVVAIDTNEVVIDIRAPEEEENKPLEIEGVEIKRIPFFKLATQFADLDKQKTYLLYCERGVMSKLQALYLIEQGYHNVKVYRP</sequence>
<proteinExistence type="inferred from homology"/>
<evidence type="ECO:0000255" key="1">
    <source>
        <dbReference type="HAMAP-Rule" id="MF_00021"/>
    </source>
</evidence>
<dbReference type="EC" id="2.8.1.4" evidence="1"/>
<dbReference type="EMBL" id="CP000469">
    <property type="protein sequence ID" value="ABK49123.1"/>
    <property type="molecule type" value="Genomic_DNA"/>
</dbReference>
<dbReference type="RefSeq" id="WP_011717761.1">
    <property type="nucleotide sequence ID" value="NC_008577.1"/>
</dbReference>
<dbReference type="SMR" id="A0KZA4"/>
<dbReference type="STRING" id="94122.Shewana3_2896"/>
<dbReference type="GeneID" id="94728836"/>
<dbReference type="KEGG" id="shn:Shewana3_2896"/>
<dbReference type="eggNOG" id="COG0301">
    <property type="taxonomic scope" value="Bacteria"/>
</dbReference>
<dbReference type="eggNOG" id="COG0607">
    <property type="taxonomic scope" value="Bacteria"/>
</dbReference>
<dbReference type="HOGENOM" id="CLU_037952_4_1_6"/>
<dbReference type="OrthoDB" id="9773948at2"/>
<dbReference type="UniPathway" id="UPA00060"/>
<dbReference type="Proteomes" id="UP000002589">
    <property type="component" value="Chromosome"/>
</dbReference>
<dbReference type="GO" id="GO:0005829">
    <property type="term" value="C:cytosol"/>
    <property type="evidence" value="ECO:0007669"/>
    <property type="project" value="TreeGrafter"/>
</dbReference>
<dbReference type="GO" id="GO:0005524">
    <property type="term" value="F:ATP binding"/>
    <property type="evidence" value="ECO:0007669"/>
    <property type="project" value="UniProtKB-UniRule"/>
</dbReference>
<dbReference type="GO" id="GO:0004810">
    <property type="term" value="F:CCA tRNA nucleotidyltransferase activity"/>
    <property type="evidence" value="ECO:0007669"/>
    <property type="project" value="InterPro"/>
</dbReference>
<dbReference type="GO" id="GO:0000049">
    <property type="term" value="F:tRNA binding"/>
    <property type="evidence" value="ECO:0007669"/>
    <property type="project" value="UniProtKB-UniRule"/>
</dbReference>
<dbReference type="GO" id="GO:0140741">
    <property type="term" value="F:tRNA-uracil-4 sulfurtransferase activity"/>
    <property type="evidence" value="ECO:0007669"/>
    <property type="project" value="UniProtKB-EC"/>
</dbReference>
<dbReference type="GO" id="GO:0009228">
    <property type="term" value="P:thiamine biosynthetic process"/>
    <property type="evidence" value="ECO:0007669"/>
    <property type="project" value="UniProtKB-KW"/>
</dbReference>
<dbReference type="GO" id="GO:0009229">
    <property type="term" value="P:thiamine diphosphate biosynthetic process"/>
    <property type="evidence" value="ECO:0007669"/>
    <property type="project" value="UniProtKB-UniRule"/>
</dbReference>
<dbReference type="GO" id="GO:0052837">
    <property type="term" value="P:thiazole biosynthetic process"/>
    <property type="evidence" value="ECO:0007669"/>
    <property type="project" value="InterPro"/>
</dbReference>
<dbReference type="GO" id="GO:0002937">
    <property type="term" value="P:tRNA 4-thiouridine biosynthesis"/>
    <property type="evidence" value="ECO:0007669"/>
    <property type="project" value="TreeGrafter"/>
</dbReference>
<dbReference type="CDD" id="cd01712">
    <property type="entry name" value="PPase_ThiI"/>
    <property type="match status" value="1"/>
</dbReference>
<dbReference type="CDD" id="cd00158">
    <property type="entry name" value="RHOD"/>
    <property type="match status" value="1"/>
</dbReference>
<dbReference type="CDD" id="cd11716">
    <property type="entry name" value="THUMP_ThiI"/>
    <property type="match status" value="1"/>
</dbReference>
<dbReference type="FunFam" id="3.30.2130.30:FF:000002">
    <property type="entry name" value="tRNA sulfurtransferase"/>
    <property type="match status" value="1"/>
</dbReference>
<dbReference type="FunFam" id="3.40.250.10:FF:000003">
    <property type="entry name" value="tRNA sulfurtransferase"/>
    <property type="match status" value="1"/>
</dbReference>
<dbReference type="FunFam" id="3.40.50.620:FF:000029">
    <property type="entry name" value="tRNA sulfurtransferase"/>
    <property type="match status" value="1"/>
</dbReference>
<dbReference type="Gene3D" id="3.30.2130.30">
    <property type="match status" value="1"/>
</dbReference>
<dbReference type="Gene3D" id="3.40.50.620">
    <property type="entry name" value="HUPs"/>
    <property type="match status" value="1"/>
</dbReference>
<dbReference type="Gene3D" id="3.40.250.10">
    <property type="entry name" value="Rhodanese-like domain"/>
    <property type="match status" value="1"/>
</dbReference>
<dbReference type="HAMAP" id="MF_00021">
    <property type="entry name" value="ThiI"/>
    <property type="match status" value="1"/>
</dbReference>
<dbReference type="InterPro" id="IPR001763">
    <property type="entry name" value="Rhodanese-like_dom"/>
</dbReference>
<dbReference type="InterPro" id="IPR036873">
    <property type="entry name" value="Rhodanese-like_dom_sf"/>
</dbReference>
<dbReference type="InterPro" id="IPR014729">
    <property type="entry name" value="Rossmann-like_a/b/a_fold"/>
</dbReference>
<dbReference type="InterPro" id="IPR020536">
    <property type="entry name" value="ThiI_AANH"/>
</dbReference>
<dbReference type="InterPro" id="IPR054173">
    <property type="entry name" value="ThiI_fer"/>
</dbReference>
<dbReference type="InterPro" id="IPR049961">
    <property type="entry name" value="ThiI_N"/>
</dbReference>
<dbReference type="InterPro" id="IPR026340">
    <property type="entry name" value="THII_Thiazole_biosynth_dom"/>
</dbReference>
<dbReference type="InterPro" id="IPR004114">
    <property type="entry name" value="THUMP_dom"/>
</dbReference>
<dbReference type="InterPro" id="IPR049962">
    <property type="entry name" value="THUMP_ThiI"/>
</dbReference>
<dbReference type="InterPro" id="IPR003720">
    <property type="entry name" value="tRNA_STrfase"/>
</dbReference>
<dbReference type="InterPro" id="IPR050102">
    <property type="entry name" value="tRNA_sulfurtransferase_ThiI"/>
</dbReference>
<dbReference type="NCBIfam" id="TIGR04271">
    <property type="entry name" value="ThiI_C_thiazole"/>
    <property type="match status" value="1"/>
</dbReference>
<dbReference type="NCBIfam" id="TIGR00342">
    <property type="entry name" value="tRNA uracil 4-sulfurtransferase ThiI"/>
    <property type="match status" value="1"/>
</dbReference>
<dbReference type="PANTHER" id="PTHR43209">
    <property type="entry name" value="TRNA SULFURTRANSFERASE"/>
    <property type="match status" value="1"/>
</dbReference>
<dbReference type="PANTHER" id="PTHR43209:SF1">
    <property type="entry name" value="TRNA SULFURTRANSFERASE"/>
    <property type="match status" value="1"/>
</dbReference>
<dbReference type="Pfam" id="PF00581">
    <property type="entry name" value="Rhodanese"/>
    <property type="match status" value="1"/>
</dbReference>
<dbReference type="Pfam" id="PF02568">
    <property type="entry name" value="ThiI"/>
    <property type="match status" value="1"/>
</dbReference>
<dbReference type="Pfam" id="PF22025">
    <property type="entry name" value="ThiI_fer"/>
    <property type="match status" value="1"/>
</dbReference>
<dbReference type="Pfam" id="PF02926">
    <property type="entry name" value="THUMP"/>
    <property type="match status" value="1"/>
</dbReference>
<dbReference type="SMART" id="SM00981">
    <property type="entry name" value="THUMP"/>
    <property type="match status" value="1"/>
</dbReference>
<dbReference type="SUPFAM" id="SSF52402">
    <property type="entry name" value="Adenine nucleotide alpha hydrolases-like"/>
    <property type="match status" value="1"/>
</dbReference>
<dbReference type="SUPFAM" id="SSF52821">
    <property type="entry name" value="Rhodanese/Cell cycle control phosphatase"/>
    <property type="match status" value="1"/>
</dbReference>
<dbReference type="SUPFAM" id="SSF143437">
    <property type="entry name" value="THUMP domain-like"/>
    <property type="match status" value="1"/>
</dbReference>
<dbReference type="PROSITE" id="PS50206">
    <property type="entry name" value="RHODANESE_3"/>
    <property type="match status" value="1"/>
</dbReference>
<dbReference type="PROSITE" id="PS51165">
    <property type="entry name" value="THUMP"/>
    <property type="match status" value="1"/>
</dbReference>
<name>THII_SHESA</name>
<gene>
    <name evidence="1" type="primary">thiI</name>
    <name type="ordered locus">Shewana3_2896</name>
</gene>